<evidence type="ECO:0000255" key="1">
    <source>
        <dbReference type="HAMAP-Rule" id="MF_01208"/>
    </source>
</evidence>
<protein>
    <recommendedName>
        <fullName evidence="1">Orotate phosphoribosyltransferase</fullName>
        <shortName evidence="1">OPRT</shortName>
        <shortName evidence="1">OPRTase</shortName>
        <ecNumber evidence="1">2.4.2.10</ecNumber>
    </recommendedName>
</protein>
<keyword id="KW-0328">Glycosyltransferase</keyword>
<keyword id="KW-0460">Magnesium</keyword>
<keyword id="KW-0665">Pyrimidine biosynthesis</keyword>
<keyword id="KW-1185">Reference proteome</keyword>
<keyword id="KW-0808">Transferase</keyword>
<sequence length="224" mass="25341">MEQYKQEFIEFMVESNVLTFGDFITKSGRRTPFFINTGNYKTGNQLNKLAKFYAKAIYDNFGDDFDILFGPAYKGIPLSVSVAMALDNIYGINAAYCSNRKEVKDHGDKGILLGAKLEEGDRVIIVEDVTTAGTSVYETMPILKSQAEVDVKGIIISVDRMERGKGDKSALTELKEKFGFKTCSIVTMEEVVEYLYKKNINGKVIIDDKMKDRINEYYKEYGVK</sequence>
<feature type="chain" id="PRO_0000110688" description="Orotate phosphoribosyltransferase">
    <location>
        <begin position="1"/>
        <end position="224"/>
    </location>
</feature>
<feature type="binding site" description="in other chain" evidence="1">
    <location>
        <position position="26"/>
    </location>
    <ligand>
        <name>5-phospho-alpha-D-ribose 1-diphosphate</name>
        <dbReference type="ChEBI" id="CHEBI:58017"/>
        <note>ligand shared between dimeric partners</note>
    </ligand>
</feature>
<feature type="binding site" description="in other chain" evidence="1">
    <location>
        <begin position="73"/>
        <end position="74"/>
    </location>
    <ligand>
        <name>5-phospho-alpha-D-ribose 1-diphosphate</name>
        <dbReference type="ChEBI" id="CHEBI:58017"/>
        <note>ligand shared between dimeric partners</note>
    </ligand>
</feature>
<feature type="binding site" evidence="1">
    <location>
        <position position="100"/>
    </location>
    <ligand>
        <name>5-phospho-alpha-D-ribose 1-diphosphate</name>
        <dbReference type="ChEBI" id="CHEBI:58017"/>
        <note>ligand shared between dimeric partners</note>
    </ligand>
</feature>
<feature type="binding site" description="in other chain" evidence="1">
    <location>
        <position position="101"/>
    </location>
    <ligand>
        <name>5-phospho-alpha-D-ribose 1-diphosphate</name>
        <dbReference type="ChEBI" id="CHEBI:58017"/>
        <note>ligand shared between dimeric partners</note>
    </ligand>
</feature>
<feature type="binding site" evidence="1">
    <location>
        <position position="104"/>
    </location>
    <ligand>
        <name>5-phospho-alpha-D-ribose 1-diphosphate</name>
        <dbReference type="ChEBI" id="CHEBI:58017"/>
        <note>ligand shared between dimeric partners</note>
    </ligand>
</feature>
<feature type="binding site" evidence="1">
    <location>
        <position position="106"/>
    </location>
    <ligand>
        <name>5-phospho-alpha-D-ribose 1-diphosphate</name>
        <dbReference type="ChEBI" id="CHEBI:58017"/>
        <note>ligand shared between dimeric partners</note>
    </ligand>
</feature>
<feature type="binding site" description="in other chain" evidence="1">
    <location>
        <begin position="127"/>
        <end position="135"/>
    </location>
    <ligand>
        <name>5-phospho-alpha-D-ribose 1-diphosphate</name>
        <dbReference type="ChEBI" id="CHEBI:58017"/>
        <note>ligand shared between dimeric partners</note>
    </ligand>
</feature>
<feature type="binding site" evidence="1">
    <location>
        <position position="131"/>
    </location>
    <ligand>
        <name>orotate</name>
        <dbReference type="ChEBI" id="CHEBI:30839"/>
    </ligand>
</feature>
<feature type="binding site" evidence="1">
    <location>
        <position position="160"/>
    </location>
    <ligand>
        <name>orotate</name>
        <dbReference type="ChEBI" id="CHEBI:30839"/>
    </ligand>
</feature>
<gene>
    <name evidence="1" type="primary">pyrE</name>
    <name type="ordered locus">CA_C0027</name>
</gene>
<organism>
    <name type="scientific">Clostridium acetobutylicum (strain ATCC 824 / DSM 792 / JCM 1419 / IAM 19013 / LMG 5710 / NBRC 13948 / NRRL B-527 / VKM B-1787 / 2291 / W)</name>
    <dbReference type="NCBI Taxonomy" id="272562"/>
    <lineage>
        <taxon>Bacteria</taxon>
        <taxon>Bacillati</taxon>
        <taxon>Bacillota</taxon>
        <taxon>Clostridia</taxon>
        <taxon>Eubacteriales</taxon>
        <taxon>Clostridiaceae</taxon>
        <taxon>Clostridium</taxon>
    </lineage>
</organism>
<comment type="function">
    <text evidence="1">Catalyzes the transfer of a ribosyl phosphate group from 5-phosphoribose 1-diphosphate to orotate, leading to the formation of orotidine monophosphate (OMP).</text>
</comment>
<comment type="catalytic activity">
    <reaction evidence="1">
        <text>orotidine 5'-phosphate + diphosphate = orotate + 5-phospho-alpha-D-ribose 1-diphosphate</text>
        <dbReference type="Rhea" id="RHEA:10380"/>
        <dbReference type="ChEBI" id="CHEBI:30839"/>
        <dbReference type="ChEBI" id="CHEBI:33019"/>
        <dbReference type="ChEBI" id="CHEBI:57538"/>
        <dbReference type="ChEBI" id="CHEBI:58017"/>
        <dbReference type="EC" id="2.4.2.10"/>
    </reaction>
</comment>
<comment type="cofactor">
    <cofactor evidence="1">
        <name>Mg(2+)</name>
        <dbReference type="ChEBI" id="CHEBI:18420"/>
    </cofactor>
</comment>
<comment type="pathway">
    <text evidence="1">Pyrimidine metabolism; UMP biosynthesis via de novo pathway; UMP from orotate: step 1/2.</text>
</comment>
<comment type="subunit">
    <text evidence="1">Homodimer.</text>
</comment>
<comment type="similarity">
    <text evidence="1">Belongs to the purine/pyrimidine phosphoribosyltransferase family. PyrE subfamily.</text>
</comment>
<dbReference type="EC" id="2.4.2.10" evidence="1"/>
<dbReference type="EMBL" id="AE001437">
    <property type="protein sequence ID" value="AAK78014.1"/>
    <property type="molecule type" value="Genomic_DNA"/>
</dbReference>
<dbReference type="EMBL" id="U15277">
    <property type="protein sequence ID" value="AAB03725.1"/>
    <property type="molecule type" value="Genomic_DNA"/>
</dbReference>
<dbReference type="PIR" id="C96903">
    <property type="entry name" value="C96903"/>
</dbReference>
<dbReference type="RefSeq" id="NP_346674.1">
    <property type="nucleotide sequence ID" value="NC_003030.1"/>
</dbReference>
<dbReference type="RefSeq" id="WP_010963356.1">
    <property type="nucleotide sequence ID" value="NC_003030.1"/>
</dbReference>
<dbReference type="SMR" id="Q97N11"/>
<dbReference type="STRING" id="272562.CA_C0027"/>
<dbReference type="GeneID" id="44996508"/>
<dbReference type="KEGG" id="cac:CA_C0027"/>
<dbReference type="PATRIC" id="fig|272562.8.peg.206"/>
<dbReference type="eggNOG" id="COG0461">
    <property type="taxonomic scope" value="Bacteria"/>
</dbReference>
<dbReference type="HOGENOM" id="CLU_074878_0_1_9"/>
<dbReference type="OrthoDB" id="9802134at2"/>
<dbReference type="UniPathway" id="UPA00070">
    <property type="reaction ID" value="UER00119"/>
</dbReference>
<dbReference type="Proteomes" id="UP000000814">
    <property type="component" value="Chromosome"/>
</dbReference>
<dbReference type="GO" id="GO:0005737">
    <property type="term" value="C:cytoplasm"/>
    <property type="evidence" value="ECO:0007669"/>
    <property type="project" value="TreeGrafter"/>
</dbReference>
<dbReference type="GO" id="GO:0000287">
    <property type="term" value="F:magnesium ion binding"/>
    <property type="evidence" value="ECO:0007669"/>
    <property type="project" value="UniProtKB-UniRule"/>
</dbReference>
<dbReference type="GO" id="GO:0004588">
    <property type="term" value="F:orotate phosphoribosyltransferase activity"/>
    <property type="evidence" value="ECO:0007669"/>
    <property type="project" value="UniProtKB-UniRule"/>
</dbReference>
<dbReference type="GO" id="GO:0006207">
    <property type="term" value="P:'de novo' pyrimidine nucleobase biosynthetic process"/>
    <property type="evidence" value="ECO:0007669"/>
    <property type="project" value="TreeGrafter"/>
</dbReference>
<dbReference type="GO" id="GO:0044205">
    <property type="term" value="P:'de novo' UMP biosynthetic process"/>
    <property type="evidence" value="ECO:0007669"/>
    <property type="project" value="UniProtKB-UniRule"/>
</dbReference>
<dbReference type="GO" id="GO:0046132">
    <property type="term" value="P:pyrimidine ribonucleoside biosynthetic process"/>
    <property type="evidence" value="ECO:0007669"/>
    <property type="project" value="TreeGrafter"/>
</dbReference>
<dbReference type="CDD" id="cd06223">
    <property type="entry name" value="PRTases_typeI"/>
    <property type="match status" value="1"/>
</dbReference>
<dbReference type="Gene3D" id="3.40.50.2020">
    <property type="match status" value="1"/>
</dbReference>
<dbReference type="HAMAP" id="MF_01208">
    <property type="entry name" value="PyrE"/>
    <property type="match status" value="1"/>
</dbReference>
<dbReference type="InterPro" id="IPR023031">
    <property type="entry name" value="OPRT"/>
</dbReference>
<dbReference type="InterPro" id="IPR004467">
    <property type="entry name" value="Or_phspho_trans_dom"/>
</dbReference>
<dbReference type="InterPro" id="IPR000836">
    <property type="entry name" value="PRibTrfase_dom"/>
</dbReference>
<dbReference type="InterPro" id="IPR029057">
    <property type="entry name" value="PRTase-like"/>
</dbReference>
<dbReference type="NCBIfam" id="TIGR00336">
    <property type="entry name" value="pyrE"/>
    <property type="match status" value="1"/>
</dbReference>
<dbReference type="PANTHER" id="PTHR46683">
    <property type="entry name" value="OROTATE PHOSPHORIBOSYLTRANSFERASE 1-RELATED"/>
    <property type="match status" value="1"/>
</dbReference>
<dbReference type="PANTHER" id="PTHR46683:SF1">
    <property type="entry name" value="OROTATE PHOSPHORIBOSYLTRANSFERASE 1-RELATED"/>
    <property type="match status" value="1"/>
</dbReference>
<dbReference type="Pfam" id="PF00156">
    <property type="entry name" value="Pribosyltran"/>
    <property type="match status" value="1"/>
</dbReference>
<dbReference type="SUPFAM" id="SSF53271">
    <property type="entry name" value="PRTase-like"/>
    <property type="match status" value="1"/>
</dbReference>
<name>PYRE_CLOAB</name>
<proteinExistence type="inferred from homology"/>
<reference key="1">
    <citation type="journal article" date="2001" name="J. Bacteriol.">
        <title>Genome sequence and comparative analysis of the solvent-producing bacterium Clostridium acetobutylicum.</title>
        <authorList>
            <person name="Noelling J."/>
            <person name="Breton G."/>
            <person name="Omelchenko M.V."/>
            <person name="Makarova K.S."/>
            <person name="Zeng Q."/>
            <person name="Gibson R."/>
            <person name="Lee H.M."/>
            <person name="Dubois J."/>
            <person name="Qiu D."/>
            <person name="Hitti J."/>
            <person name="Wolf Y.I."/>
            <person name="Tatusov R.L."/>
            <person name="Sabathe F."/>
            <person name="Doucette-Stamm L.A."/>
            <person name="Soucaille P."/>
            <person name="Daly M.J."/>
            <person name="Bennett G.N."/>
            <person name="Koonin E.V."/>
            <person name="Smith D.R."/>
        </authorList>
    </citation>
    <scope>NUCLEOTIDE SEQUENCE [LARGE SCALE GENOMIC DNA]</scope>
    <source>
        <strain>ATCC 824 / DSM 792 / JCM 1419 / IAM 19013 / LMG 5710 / NBRC 13948 / NRRL B-527 / VKM B-1787 / 2291 / W</strain>
    </source>
</reference>
<reference key="2">
    <citation type="journal article" date="1996" name="J. Bacteriol.">
        <title>Molecular characterization and transcriptional analysis of the putative hydrogenase gene of Clostridium acetobutylicum ATCC 824.</title>
        <authorList>
            <person name="Gorwa M.F."/>
            <person name="Croux C."/>
            <person name="Soucaille P."/>
        </authorList>
    </citation>
    <scope>NUCLEOTIDE SEQUENCE [GENOMIC DNA] OF 116-224</scope>
    <source>
        <strain>ATCC 824 / DSM 792 / JCM 1419 / IAM 19013 / LMG 5710 / NBRC 13948 / NRRL B-527 / VKM B-1787 / 2291 / W</strain>
    </source>
</reference>
<accession>Q97N11</accession>
<accession>Q45806</accession>